<reference key="1">
    <citation type="journal article" date="2008" name="J. Bacteriol.">
        <title>Genome sequence of the chemolithoautotrophic bacterium Oligotropha carboxidovorans OM5T.</title>
        <authorList>
            <person name="Paul D."/>
            <person name="Bridges S."/>
            <person name="Burgess S.C."/>
            <person name="Dandass Y."/>
            <person name="Lawrence M.L."/>
        </authorList>
    </citation>
    <scope>NUCLEOTIDE SEQUENCE [LARGE SCALE GENOMIC DNA]</scope>
    <source>
        <strain>ATCC 49405 / DSM 1227 / KCTC 32145 / OM5</strain>
    </source>
</reference>
<reference key="2">
    <citation type="journal article" date="2011" name="J. Bacteriol.">
        <title>Complete genome sequences of the chemolithoautotrophic Oligotropha carboxidovorans strains OM4 and OM5.</title>
        <authorList>
            <person name="Volland S."/>
            <person name="Rachinger M."/>
            <person name="Strittmatter A."/>
            <person name="Daniel R."/>
            <person name="Gottschalk G."/>
            <person name="Meyer O."/>
        </authorList>
    </citation>
    <scope>NUCLEOTIDE SEQUENCE [LARGE SCALE GENOMIC DNA]</scope>
    <source>
        <strain>ATCC 49405 / DSM 1227 / KCTC 32145 / OM5</strain>
    </source>
</reference>
<proteinExistence type="inferred from homology"/>
<dbReference type="EC" id="3.2.2.23" evidence="2"/>
<dbReference type="EC" id="4.2.99.18" evidence="2"/>
<dbReference type="EMBL" id="CP001196">
    <property type="protein sequence ID" value="ACI91637.1"/>
    <property type="molecule type" value="Genomic_DNA"/>
</dbReference>
<dbReference type="EMBL" id="CP002826">
    <property type="protein sequence ID" value="AEI04776.1"/>
    <property type="molecule type" value="Genomic_DNA"/>
</dbReference>
<dbReference type="RefSeq" id="WP_012561668.1">
    <property type="nucleotide sequence ID" value="NC_015684.1"/>
</dbReference>
<dbReference type="SMR" id="B6JCQ7"/>
<dbReference type="STRING" id="504832.OCA5_c00420"/>
<dbReference type="KEGG" id="oca:OCAR_4492"/>
<dbReference type="KEGG" id="ocg:OCA5_c00420"/>
<dbReference type="PATRIC" id="fig|504832.7.peg.45"/>
<dbReference type="eggNOG" id="COG0266">
    <property type="taxonomic scope" value="Bacteria"/>
</dbReference>
<dbReference type="HOGENOM" id="CLU_038423_1_1_5"/>
<dbReference type="OrthoDB" id="9800855at2"/>
<dbReference type="Proteomes" id="UP000007730">
    <property type="component" value="Chromosome"/>
</dbReference>
<dbReference type="GO" id="GO:0034039">
    <property type="term" value="F:8-oxo-7,8-dihydroguanine DNA N-glycosylase activity"/>
    <property type="evidence" value="ECO:0007669"/>
    <property type="project" value="TreeGrafter"/>
</dbReference>
<dbReference type="GO" id="GO:0140078">
    <property type="term" value="F:class I DNA-(apurinic or apyrimidinic site) endonuclease activity"/>
    <property type="evidence" value="ECO:0007669"/>
    <property type="project" value="UniProtKB-EC"/>
</dbReference>
<dbReference type="GO" id="GO:0003684">
    <property type="term" value="F:damaged DNA binding"/>
    <property type="evidence" value="ECO:0007669"/>
    <property type="project" value="InterPro"/>
</dbReference>
<dbReference type="GO" id="GO:0008270">
    <property type="term" value="F:zinc ion binding"/>
    <property type="evidence" value="ECO:0007669"/>
    <property type="project" value="UniProtKB-UniRule"/>
</dbReference>
<dbReference type="GO" id="GO:0006284">
    <property type="term" value="P:base-excision repair"/>
    <property type="evidence" value="ECO:0007669"/>
    <property type="project" value="InterPro"/>
</dbReference>
<dbReference type="CDD" id="cd08966">
    <property type="entry name" value="EcFpg-like_N"/>
    <property type="match status" value="1"/>
</dbReference>
<dbReference type="FunFam" id="1.10.8.50:FF:000003">
    <property type="entry name" value="Formamidopyrimidine-DNA glycosylase"/>
    <property type="match status" value="1"/>
</dbReference>
<dbReference type="Gene3D" id="1.10.8.50">
    <property type="match status" value="1"/>
</dbReference>
<dbReference type="Gene3D" id="3.20.190.10">
    <property type="entry name" value="MutM-like, N-terminal"/>
    <property type="match status" value="1"/>
</dbReference>
<dbReference type="HAMAP" id="MF_00103">
    <property type="entry name" value="Fapy_DNA_glycosyl"/>
    <property type="match status" value="1"/>
</dbReference>
<dbReference type="InterPro" id="IPR015886">
    <property type="entry name" value="DNA_glyclase/AP_lyase_DNA-bd"/>
</dbReference>
<dbReference type="InterPro" id="IPR015887">
    <property type="entry name" value="DNA_glyclase_Znf_dom_DNA_BS"/>
</dbReference>
<dbReference type="InterPro" id="IPR020629">
    <property type="entry name" value="Formamido-pyr_DNA_Glyclase"/>
</dbReference>
<dbReference type="InterPro" id="IPR012319">
    <property type="entry name" value="FPG_cat"/>
</dbReference>
<dbReference type="InterPro" id="IPR035937">
    <property type="entry name" value="MutM-like_N-ter"/>
</dbReference>
<dbReference type="InterPro" id="IPR010979">
    <property type="entry name" value="Ribosomal_uS13-like_H2TH"/>
</dbReference>
<dbReference type="InterPro" id="IPR000214">
    <property type="entry name" value="Znf_DNA_glyclase/AP_lyase"/>
</dbReference>
<dbReference type="NCBIfam" id="TIGR00577">
    <property type="entry name" value="fpg"/>
    <property type="match status" value="1"/>
</dbReference>
<dbReference type="NCBIfam" id="NF002211">
    <property type="entry name" value="PRK01103.1"/>
    <property type="match status" value="1"/>
</dbReference>
<dbReference type="PANTHER" id="PTHR22993">
    <property type="entry name" value="FORMAMIDOPYRIMIDINE-DNA GLYCOSYLASE"/>
    <property type="match status" value="1"/>
</dbReference>
<dbReference type="PANTHER" id="PTHR22993:SF9">
    <property type="entry name" value="FORMAMIDOPYRIMIDINE-DNA GLYCOSYLASE"/>
    <property type="match status" value="1"/>
</dbReference>
<dbReference type="Pfam" id="PF01149">
    <property type="entry name" value="Fapy_DNA_glyco"/>
    <property type="match status" value="1"/>
</dbReference>
<dbReference type="Pfam" id="PF06831">
    <property type="entry name" value="H2TH"/>
    <property type="match status" value="1"/>
</dbReference>
<dbReference type="SMART" id="SM00898">
    <property type="entry name" value="Fapy_DNA_glyco"/>
    <property type="match status" value="1"/>
</dbReference>
<dbReference type="SMART" id="SM01232">
    <property type="entry name" value="H2TH"/>
    <property type="match status" value="1"/>
</dbReference>
<dbReference type="SUPFAM" id="SSF57716">
    <property type="entry name" value="Glucocorticoid receptor-like (DNA-binding domain)"/>
    <property type="match status" value="1"/>
</dbReference>
<dbReference type="SUPFAM" id="SSF81624">
    <property type="entry name" value="N-terminal domain of MutM-like DNA repair proteins"/>
    <property type="match status" value="1"/>
</dbReference>
<dbReference type="SUPFAM" id="SSF46946">
    <property type="entry name" value="S13-like H2TH domain"/>
    <property type="match status" value="1"/>
</dbReference>
<dbReference type="PROSITE" id="PS51068">
    <property type="entry name" value="FPG_CAT"/>
    <property type="match status" value="1"/>
</dbReference>
<dbReference type="PROSITE" id="PS01242">
    <property type="entry name" value="ZF_FPG_1"/>
    <property type="match status" value="1"/>
</dbReference>
<dbReference type="PROSITE" id="PS51066">
    <property type="entry name" value="ZF_FPG_2"/>
    <property type="match status" value="1"/>
</dbReference>
<feature type="initiator methionine" description="Removed" evidence="1">
    <location>
        <position position="1"/>
    </location>
</feature>
<feature type="chain" id="PRO_1000094059" description="Formamidopyrimidine-DNA glycosylase">
    <location>
        <begin position="2"/>
        <end position="294"/>
    </location>
</feature>
<feature type="zinc finger region" description="FPG-type" evidence="2">
    <location>
        <begin position="258"/>
        <end position="294"/>
    </location>
</feature>
<feature type="active site" description="Schiff-base intermediate with DNA" evidence="2">
    <location>
        <position position="2"/>
    </location>
</feature>
<feature type="active site" description="Proton donor" evidence="2">
    <location>
        <position position="3"/>
    </location>
</feature>
<feature type="active site" description="Proton donor; for beta-elimination activity" evidence="2">
    <location>
        <position position="58"/>
    </location>
</feature>
<feature type="active site" description="Proton donor; for delta-elimination activity" evidence="2">
    <location>
        <position position="284"/>
    </location>
</feature>
<feature type="binding site" evidence="2">
    <location>
        <position position="105"/>
    </location>
    <ligand>
        <name>DNA</name>
        <dbReference type="ChEBI" id="CHEBI:16991"/>
    </ligand>
</feature>
<feature type="binding site" evidence="2">
    <location>
        <position position="124"/>
    </location>
    <ligand>
        <name>DNA</name>
        <dbReference type="ChEBI" id="CHEBI:16991"/>
    </ligand>
</feature>
<feature type="binding site" evidence="2">
    <location>
        <position position="167"/>
    </location>
    <ligand>
        <name>DNA</name>
        <dbReference type="ChEBI" id="CHEBI:16991"/>
    </ligand>
</feature>
<keyword id="KW-0227">DNA damage</keyword>
<keyword id="KW-0234">DNA repair</keyword>
<keyword id="KW-0238">DNA-binding</keyword>
<keyword id="KW-0326">Glycosidase</keyword>
<keyword id="KW-0378">Hydrolase</keyword>
<keyword id="KW-0456">Lyase</keyword>
<keyword id="KW-0479">Metal-binding</keyword>
<keyword id="KW-0511">Multifunctional enzyme</keyword>
<keyword id="KW-1185">Reference proteome</keyword>
<keyword id="KW-0862">Zinc</keyword>
<keyword id="KW-0863">Zinc-finger</keyword>
<protein>
    <recommendedName>
        <fullName evidence="2">Formamidopyrimidine-DNA glycosylase</fullName>
        <shortName evidence="2">Fapy-DNA glycosylase</shortName>
        <ecNumber evidence="2">3.2.2.23</ecNumber>
    </recommendedName>
    <alternativeName>
        <fullName evidence="2">DNA-(apurinic or apyrimidinic site) lyase MutM</fullName>
        <shortName evidence="2">AP lyase MutM</shortName>
        <ecNumber evidence="2">4.2.99.18</ecNumber>
    </alternativeName>
</protein>
<sequence length="294" mass="32186">MPELPEVETVRRGLIPAMEGVRIARVTAHRNDLRFPLQTDFVARLGGRVVTGLGRRAKYLLADLDSGDVLLMHLGMSGSFRVAMDGGQEATPGIFHHPRSESRTHDHVVFEMDNGAVISFNDPRRFGYMKIVARADLEAEPFLKALGPEPLGNEFNAAMLAQACAGKATSLKAALLDQRVVAGLGNIYVCEALYRAHLSPKRRASTLASRTGAPSGHAERLVPAIRTVLNAAIEAGGSSLRDHRQTTGELGYFQHSFQVYDREGEPCRTRGCKGTVKRFTQNGRSTFWCPSCQK</sequence>
<evidence type="ECO:0000250" key="1"/>
<evidence type="ECO:0000255" key="2">
    <source>
        <dbReference type="HAMAP-Rule" id="MF_00103"/>
    </source>
</evidence>
<comment type="function">
    <text evidence="2">Involved in base excision repair of DNA damaged by oxidation or by mutagenic agents. Acts as a DNA glycosylase that recognizes and removes damaged bases. Has a preference for oxidized purines, such as 7,8-dihydro-8-oxoguanine (8-oxoG). Has AP (apurinic/apyrimidinic) lyase activity and introduces nicks in the DNA strand. Cleaves the DNA backbone by beta-delta elimination to generate a single-strand break at the site of the removed base with both 3'- and 5'-phosphates.</text>
</comment>
<comment type="catalytic activity">
    <reaction evidence="2">
        <text>Hydrolysis of DNA containing ring-opened 7-methylguanine residues, releasing 2,6-diamino-4-hydroxy-5-(N-methyl)formamidopyrimidine.</text>
        <dbReference type="EC" id="3.2.2.23"/>
    </reaction>
</comment>
<comment type="catalytic activity">
    <reaction evidence="2">
        <text>2'-deoxyribonucleotide-(2'-deoxyribose 5'-phosphate)-2'-deoxyribonucleotide-DNA = a 3'-end 2'-deoxyribonucleotide-(2,3-dehydro-2,3-deoxyribose 5'-phosphate)-DNA + a 5'-end 5'-phospho-2'-deoxyribonucleoside-DNA + H(+)</text>
        <dbReference type="Rhea" id="RHEA:66592"/>
        <dbReference type="Rhea" id="RHEA-COMP:13180"/>
        <dbReference type="Rhea" id="RHEA-COMP:16897"/>
        <dbReference type="Rhea" id="RHEA-COMP:17067"/>
        <dbReference type="ChEBI" id="CHEBI:15378"/>
        <dbReference type="ChEBI" id="CHEBI:136412"/>
        <dbReference type="ChEBI" id="CHEBI:157695"/>
        <dbReference type="ChEBI" id="CHEBI:167181"/>
        <dbReference type="EC" id="4.2.99.18"/>
    </reaction>
</comment>
<comment type="cofactor">
    <cofactor evidence="2">
        <name>Zn(2+)</name>
        <dbReference type="ChEBI" id="CHEBI:29105"/>
    </cofactor>
    <text evidence="2">Binds 1 zinc ion per subunit.</text>
</comment>
<comment type="subunit">
    <text evidence="2">Monomer.</text>
</comment>
<comment type="similarity">
    <text evidence="2">Belongs to the FPG family.</text>
</comment>
<gene>
    <name evidence="2" type="primary">mutM</name>
    <name evidence="2" type="synonym">fpg</name>
    <name type="ordered locus">OCAR_4492</name>
    <name type="ordered locus">OCA5_c00420</name>
</gene>
<name>FPG_AFIC5</name>
<organism>
    <name type="scientific">Afipia carboxidovorans (strain ATCC 49405 / DSM 1227 / KCTC 32145 / OM5)</name>
    <name type="common">Oligotropha carboxidovorans</name>
    <dbReference type="NCBI Taxonomy" id="504832"/>
    <lineage>
        <taxon>Bacteria</taxon>
        <taxon>Pseudomonadati</taxon>
        <taxon>Pseudomonadota</taxon>
        <taxon>Alphaproteobacteria</taxon>
        <taxon>Hyphomicrobiales</taxon>
        <taxon>Nitrobacteraceae</taxon>
        <taxon>Afipia</taxon>
    </lineage>
</organism>
<accession>B6JCQ7</accession>
<accession>F8BZP2</accession>